<dbReference type="EMBL" id="S63263">
    <property type="protein sequence ID" value="AAB19629.1"/>
    <property type="molecule type" value="mRNA"/>
</dbReference>
<dbReference type="EMBL" id="S63261">
    <property type="protein sequence ID" value="AAD13942.1"/>
    <property type="molecule type" value="Genomic_DNA"/>
</dbReference>
<dbReference type="EMBL" id="U31863">
    <property type="protein sequence ID" value="AAA80310.1"/>
    <property type="molecule type" value="mRNA"/>
</dbReference>
<dbReference type="PIR" id="A60130">
    <property type="entry name" value="A60130"/>
</dbReference>
<dbReference type="RefSeq" id="NP_990511.1">
    <property type="nucleotide sequence ID" value="NM_205180.2"/>
</dbReference>
<dbReference type="RefSeq" id="XP_015149495.1">
    <property type="nucleotide sequence ID" value="XM_015294009.4"/>
</dbReference>
<dbReference type="RefSeq" id="XP_015149496.1">
    <property type="nucleotide sequence ID" value="XM_015294010.4"/>
</dbReference>
<dbReference type="RefSeq" id="XP_025010582.1">
    <property type="nucleotide sequence ID" value="XM_025154814.3"/>
</dbReference>
<dbReference type="RefSeq" id="XP_040502790.1">
    <property type="nucleotide sequence ID" value="XM_040646856.2"/>
</dbReference>
<dbReference type="RefSeq" id="XP_040502791.1">
    <property type="nucleotide sequence ID" value="XM_040646857.2"/>
</dbReference>
<dbReference type="RefSeq" id="XP_046782818.1">
    <property type="nucleotide sequence ID" value="XM_046926862.1"/>
</dbReference>
<dbReference type="RefSeq" id="XP_046782819.1">
    <property type="nucleotide sequence ID" value="XM_046926863.1"/>
</dbReference>
<dbReference type="RefSeq" id="XP_046782820.1">
    <property type="nucleotide sequence ID" value="XM_046926864.1"/>
</dbReference>
<dbReference type="RefSeq" id="XP_046782821.1">
    <property type="nucleotide sequence ID" value="XM_046926865.1"/>
</dbReference>
<dbReference type="RefSeq" id="XP_046782822.1">
    <property type="nucleotide sequence ID" value="XM_046926866.1"/>
</dbReference>
<dbReference type="SMR" id="P19596"/>
<dbReference type="FunCoup" id="P19596">
    <property type="interactions" value="170"/>
</dbReference>
<dbReference type="STRING" id="9031.ENSGALP00000070539"/>
<dbReference type="PaxDb" id="9031-ENSGALP00000011866"/>
<dbReference type="Ensembl" id="ENSGALT00010032262.1">
    <property type="protein sequence ID" value="ENSGALP00010019052.1"/>
    <property type="gene ID" value="ENSGALG00010013399.1"/>
</dbReference>
<dbReference type="GeneID" id="396094"/>
<dbReference type="KEGG" id="gga:396094"/>
<dbReference type="CTD" id="2246"/>
<dbReference type="VEuPathDB" id="HostDB:geneid_396094"/>
<dbReference type="eggNOG" id="KOG3885">
    <property type="taxonomic scope" value="Eukaryota"/>
</dbReference>
<dbReference type="GeneTree" id="ENSGT00940000160557"/>
<dbReference type="HOGENOM" id="CLU_081609_5_1_1"/>
<dbReference type="InParanoid" id="P19596"/>
<dbReference type="OMA" id="NTYKSKM"/>
<dbReference type="OrthoDB" id="5987799at2759"/>
<dbReference type="PhylomeDB" id="P19596"/>
<dbReference type="TreeFam" id="TF317805"/>
<dbReference type="Reactome" id="R-GGA-109704">
    <property type="pathway name" value="PI3K Cascade"/>
</dbReference>
<dbReference type="Reactome" id="R-GGA-1257604">
    <property type="pathway name" value="PIP3 activates AKT signaling"/>
</dbReference>
<dbReference type="Reactome" id="R-GGA-190322">
    <property type="pathway name" value="FGFR4 ligand binding and activation"/>
</dbReference>
<dbReference type="Reactome" id="R-GGA-190370">
    <property type="pathway name" value="FGFR1b ligand binding and activation"/>
</dbReference>
<dbReference type="Reactome" id="R-GGA-190371">
    <property type="pathway name" value="FGFR3b ligand binding and activation"/>
</dbReference>
<dbReference type="Reactome" id="R-GGA-190372">
    <property type="pathway name" value="FGFR3c ligand binding and activation"/>
</dbReference>
<dbReference type="Reactome" id="R-GGA-190373">
    <property type="pathway name" value="FGFR1c ligand binding and activation"/>
</dbReference>
<dbReference type="Reactome" id="R-GGA-190375">
    <property type="pathway name" value="FGFR2c ligand binding and activation"/>
</dbReference>
<dbReference type="Reactome" id="R-GGA-190377">
    <property type="pathway name" value="FGFR2b ligand binding and activation"/>
</dbReference>
<dbReference type="Reactome" id="R-GGA-5654219">
    <property type="pathway name" value="Phospholipase C-mediated cascade: FGFR1"/>
</dbReference>
<dbReference type="Reactome" id="R-GGA-5654221">
    <property type="pathway name" value="Phospholipase C-mediated cascade, FGFR2"/>
</dbReference>
<dbReference type="Reactome" id="R-GGA-5654227">
    <property type="pathway name" value="Phospholipase C-mediated cascade, FGFR3"/>
</dbReference>
<dbReference type="Reactome" id="R-GGA-5654228">
    <property type="pathway name" value="Phospholipase C-mediated cascade, FGFR4"/>
</dbReference>
<dbReference type="Reactome" id="R-GGA-5654687">
    <property type="pathway name" value="Downstream signaling of activated FGFR1"/>
</dbReference>
<dbReference type="Reactome" id="R-GGA-5654688">
    <property type="pathway name" value="SHC-mediated cascade:FGFR1"/>
</dbReference>
<dbReference type="Reactome" id="R-GGA-5654689">
    <property type="pathway name" value="PI-3K cascade:FGFR1"/>
</dbReference>
<dbReference type="Reactome" id="R-GGA-5654693">
    <property type="pathway name" value="FRS-mediated FGFR1 signaling"/>
</dbReference>
<dbReference type="Reactome" id="R-GGA-5654695">
    <property type="pathway name" value="PI-3K cascade:FGFR2"/>
</dbReference>
<dbReference type="Reactome" id="R-GGA-5654699">
    <property type="pathway name" value="SHC-mediated cascade:FGFR2"/>
</dbReference>
<dbReference type="Reactome" id="R-GGA-5654700">
    <property type="pathway name" value="FRS-mediated FGFR2 signaling"/>
</dbReference>
<dbReference type="Reactome" id="R-GGA-5654704">
    <property type="pathway name" value="SHC-mediated cascade:FGFR3"/>
</dbReference>
<dbReference type="Reactome" id="R-GGA-5654706">
    <property type="pathway name" value="FRS-mediated FGFR3 signaling"/>
</dbReference>
<dbReference type="Reactome" id="R-GGA-5654710">
    <property type="pathway name" value="PI-3K cascade:FGFR3"/>
</dbReference>
<dbReference type="Reactome" id="R-GGA-5654712">
    <property type="pathway name" value="FRS-mediated FGFR4 signaling"/>
</dbReference>
<dbReference type="Reactome" id="R-GGA-5654719">
    <property type="pathway name" value="SHC-mediated cascade:FGFR4"/>
</dbReference>
<dbReference type="Reactome" id="R-GGA-5654720">
    <property type="pathway name" value="PI-3K cascade:FGFR4"/>
</dbReference>
<dbReference type="Reactome" id="R-GGA-5654726">
    <property type="pathway name" value="Negative regulation of FGFR1 signaling"/>
</dbReference>
<dbReference type="Reactome" id="R-GGA-5654727">
    <property type="pathway name" value="Negative regulation of FGFR2 signaling"/>
</dbReference>
<dbReference type="Reactome" id="R-GGA-5654732">
    <property type="pathway name" value="Negative regulation of FGFR3 signaling"/>
</dbReference>
<dbReference type="Reactome" id="R-GGA-5654733">
    <property type="pathway name" value="Negative regulation of FGFR4 signaling"/>
</dbReference>
<dbReference type="Reactome" id="R-GGA-5673001">
    <property type="pathway name" value="RAF/MAP kinase cascade"/>
</dbReference>
<dbReference type="Reactome" id="R-GGA-6811558">
    <property type="pathway name" value="PI5P, PP2A and IER3 Regulate PI3K/AKT Signaling"/>
</dbReference>
<dbReference type="PRO" id="PR:P19596"/>
<dbReference type="Proteomes" id="UP000000539">
    <property type="component" value="Chromosome 13"/>
</dbReference>
<dbReference type="Bgee" id="ENSGALG00000031255">
    <property type="expression patterns" value="Expressed in heart and 8 other cell types or tissues"/>
</dbReference>
<dbReference type="GO" id="GO:0005938">
    <property type="term" value="C:cell cortex"/>
    <property type="evidence" value="ECO:0007669"/>
    <property type="project" value="UniProtKB-SubCell"/>
</dbReference>
<dbReference type="GO" id="GO:0005737">
    <property type="term" value="C:cytoplasm"/>
    <property type="evidence" value="ECO:0000318"/>
    <property type="project" value="GO_Central"/>
</dbReference>
<dbReference type="GO" id="GO:0005829">
    <property type="term" value="C:cytosol"/>
    <property type="evidence" value="ECO:0000250"/>
    <property type="project" value="UniProtKB"/>
</dbReference>
<dbReference type="GO" id="GO:0005576">
    <property type="term" value="C:extracellular region"/>
    <property type="evidence" value="ECO:0000250"/>
    <property type="project" value="UniProtKB"/>
</dbReference>
<dbReference type="GO" id="GO:0005615">
    <property type="term" value="C:extracellular space"/>
    <property type="evidence" value="ECO:0000250"/>
    <property type="project" value="UniProtKB"/>
</dbReference>
<dbReference type="GO" id="GO:0005634">
    <property type="term" value="C:nucleus"/>
    <property type="evidence" value="ECO:0000318"/>
    <property type="project" value="GO_Central"/>
</dbReference>
<dbReference type="GO" id="GO:0005104">
    <property type="term" value="F:fibroblast growth factor receptor binding"/>
    <property type="evidence" value="ECO:0000250"/>
    <property type="project" value="UniProtKB"/>
</dbReference>
<dbReference type="GO" id="GO:0008083">
    <property type="term" value="F:growth factor activity"/>
    <property type="evidence" value="ECO:0000250"/>
    <property type="project" value="UniProtKB"/>
</dbReference>
<dbReference type="GO" id="GO:0008201">
    <property type="term" value="F:heparin binding"/>
    <property type="evidence" value="ECO:0000250"/>
    <property type="project" value="UniProtKB"/>
</dbReference>
<dbReference type="GO" id="GO:0005178">
    <property type="term" value="F:integrin binding"/>
    <property type="evidence" value="ECO:0000250"/>
    <property type="project" value="UniProtKB"/>
</dbReference>
<dbReference type="GO" id="GO:0044548">
    <property type="term" value="F:S100 protein binding"/>
    <property type="evidence" value="ECO:0000250"/>
    <property type="project" value="UniProtKB"/>
</dbReference>
<dbReference type="GO" id="GO:0001525">
    <property type="term" value="P:angiogenesis"/>
    <property type="evidence" value="ECO:0007669"/>
    <property type="project" value="UniProtKB-KW"/>
</dbReference>
<dbReference type="GO" id="GO:0060681">
    <property type="term" value="P:branch elongation involved in ureteric bud branching"/>
    <property type="evidence" value="ECO:0000250"/>
    <property type="project" value="UniProtKB"/>
</dbReference>
<dbReference type="GO" id="GO:0003347">
    <property type="term" value="P:epicardial cell to mesenchymal cell transition"/>
    <property type="evidence" value="ECO:0000304"/>
    <property type="project" value="DFLAT"/>
</dbReference>
<dbReference type="GO" id="GO:0008543">
    <property type="term" value="P:fibroblast growth factor receptor signaling pathway"/>
    <property type="evidence" value="ECO:0000250"/>
    <property type="project" value="UniProtKB"/>
</dbReference>
<dbReference type="GO" id="GO:0072163">
    <property type="term" value="P:mesonephric epithelium development"/>
    <property type="evidence" value="ECO:0000250"/>
    <property type="project" value="UniProtKB"/>
</dbReference>
<dbReference type="GO" id="GO:0022008">
    <property type="term" value="P:neurogenesis"/>
    <property type="evidence" value="ECO:0000318"/>
    <property type="project" value="GO_Central"/>
</dbReference>
<dbReference type="GO" id="GO:0045766">
    <property type="term" value="P:positive regulation of angiogenesis"/>
    <property type="evidence" value="ECO:0000250"/>
    <property type="project" value="UniProtKB"/>
</dbReference>
<dbReference type="GO" id="GO:0051781">
    <property type="term" value="P:positive regulation of cell division"/>
    <property type="evidence" value="ECO:0000250"/>
    <property type="project" value="UniProtKB"/>
</dbReference>
<dbReference type="GO" id="GO:0030335">
    <property type="term" value="P:positive regulation of cell migration"/>
    <property type="evidence" value="ECO:0000250"/>
    <property type="project" value="UniProtKB"/>
</dbReference>
<dbReference type="GO" id="GO:0008284">
    <property type="term" value="P:positive regulation of cell population proliferation"/>
    <property type="evidence" value="ECO:0000250"/>
    <property type="project" value="UniProtKB"/>
</dbReference>
<dbReference type="GO" id="GO:0045542">
    <property type="term" value="P:positive regulation of cholesterol biosynthetic process"/>
    <property type="evidence" value="ECO:0000250"/>
    <property type="project" value="UniProtKB"/>
</dbReference>
<dbReference type="GO" id="GO:1902533">
    <property type="term" value="P:positive regulation of intracellular signal transduction"/>
    <property type="evidence" value="ECO:0000250"/>
    <property type="project" value="UniProtKB"/>
</dbReference>
<dbReference type="GO" id="GO:0043410">
    <property type="term" value="P:positive regulation of MAPK cascade"/>
    <property type="evidence" value="ECO:0000318"/>
    <property type="project" value="GO_Central"/>
</dbReference>
<dbReference type="GO" id="GO:0045944">
    <property type="term" value="P:positive regulation of transcription by RNA polymerase II"/>
    <property type="evidence" value="ECO:0000250"/>
    <property type="project" value="UniProtKB"/>
</dbReference>
<dbReference type="GO" id="GO:0030334">
    <property type="term" value="P:regulation of cell migration"/>
    <property type="evidence" value="ECO:0000318"/>
    <property type="project" value="GO_Central"/>
</dbReference>
<dbReference type="CDD" id="cd23313">
    <property type="entry name" value="beta-trefoil_FGF1"/>
    <property type="match status" value="1"/>
</dbReference>
<dbReference type="FunFam" id="2.80.10.50:FF:000020">
    <property type="entry name" value="Fibroblast growth factor 1"/>
    <property type="match status" value="1"/>
</dbReference>
<dbReference type="Gene3D" id="2.80.10.50">
    <property type="match status" value="1"/>
</dbReference>
<dbReference type="InterPro" id="IPR002209">
    <property type="entry name" value="Fibroblast_GF_fam"/>
</dbReference>
<dbReference type="InterPro" id="IPR008996">
    <property type="entry name" value="IL1/FGF"/>
</dbReference>
<dbReference type="PANTHER" id="PTHR11486">
    <property type="entry name" value="FIBROBLAST GROWTH FACTOR"/>
    <property type="match status" value="1"/>
</dbReference>
<dbReference type="Pfam" id="PF00167">
    <property type="entry name" value="FGF"/>
    <property type="match status" value="1"/>
</dbReference>
<dbReference type="PRINTS" id="PR00263">
    <property type="entry name" value="HBGFFGF"/>
</dbReference>
<dbReference type="PRINTS" id="PR00262">
    <property type="entry name" value="IL1HBGF"/>
</dbReference>
<dbReference type="SMART" id="SM00442">
    <property type="entry name" value="FGF"/>
    <property type="match status" value="1"/>
</dbReference>
<dbReference type="SUPFAM" id="SSF50353">
    <property type="entry name" value="Cytokine"/>
    <property type="match status" value="1"/>
</dbReference>
<dbReference type="PROSITE" id="PS00247">
    <property type="entry name" value="HBGF_FGF"/>
    <property type="match status" value="1"/>
</dbReference>
<gene>
    <name type="primary">FGF1</name>
</gene>
<feature type="propeptide" id="PRO_0000008920">
    <location>
        <begin position="1"/>
        <end position="15"/>
    </location>
</feature>
<feature type="chain" id="PRO_0000008921" description="Fibroblast growth factor 1">
    <location>
        <begin position="16"/>
        <end position="155"/>
    </location>
</feature>
<feature type="chain" id="PRO_0000008922" description="Endothelial cell growth factor alpha">
    <location>
        <begin position="22"/>
        <end position="155"/>
    </location>
</feature>
<feature type="region of interest" description="Heparin-binding" evidence="1">
    <location>
        <begin position="127"/>
        <end position="143"/>
    </location>
</feature>
<feature type="binding site" evidence="1">
    <location>
        <position position="33"/>
    </location>
    <ligand>
        <name>heparin</name>
        <dbReference type="ChEBI" id="CHEBI:28304"/>
    </ligand>
</feature>
<comment type="function">
    <text evidence="2">Plays an important role in the regulation of cell survival, cell division, angiogenesis, cell differentiation and cell migration. Functions as a potent mitogen in vitro. Acts as a ligand for FGFR1 and integrins. Binds to FGFR1 in the presence of heparin leading to FGFR1 dimerization and activation via sequential autophosphorylation on tyrosine residues which act as docking sites for interacting proteins, leading to the activation of several signaling cascades. Binds to integrins. Its binding to integrins and subsequent ternary complex formation with integrins and FGFR1 are essential for FGF1 signaling.</text>
</comment>
<comment type="subcellular location">
    <subcellularLocation>
        <location evidence="1">Secreted</location>
    </subcellularLocation>
    <subcellularLocation>
        <location evidence="1">Cytoplasm</location>
    </subcellularLocation>
    <subcellularLocation>
        <location evidence="1">Cytoplasm</location>
        <location evidence="1">Cell cortex</location>
    </subcellularLocation>
    <subcellularLocation>
        <location evidence="1">Cytoplasm</location>
        <location evidence="1">Cytosol</location>
    </subcellularLocation>
    <subcellularLocation>
        <location evidence="1">Nucleus</location>
    </subcellularLocation>
    <text evidence="1">Lacks a cleavable signal sequence. Within the cytoplasm, it is transported to the cell membrane and then secreted by a non-classical pathway that requires Cu(2+) ions and S100A13 (By similarity). Binding of exogenous FGF1 to FGFR facilitates endocytosis followed by translocation of FGF1 across endosomal membrane into the cytosol. Nuclear import from the cytosol requires the classical nuclear import machinery (By similarity).</text>
</comment>
<comment type="similarity">
    <text evidence="3">Belongs to the heparin-binding growth factors family.</text>
</comment>
<sequence length="155" mass="17322">MAEGEITTFTALTERFGLPLGNYKKPKLLYCSNGGHFLRILPDGKVDGTRDRSDQHIQLQLSAEDVGEVYIKSTASGQYLAMDTNGLLYGSQLPGEECLFLERLEENHYNTYISKKHADKNWFVGLKKNGNSKLGPRTHYGQKAILFLPLPVSAD</sequence>
<keyword id="KW-0037">Angiogenesis</keyword>
<keyword id="KW-0963">Cytoplasm</keyword>
<keyword id="KW-0217">Developmental protein</keyword>
<keyword id="KW-0221">Differentiation</keyword>
<keyword id="KW-0903">Direct protein sequencing</keyword>
<keyword id="KW-0339">Growth factor</keyword>
<keyword id="KW-0358">Heparin-binding</keyword>
<keyword id="KW-0497">Mitogen</keyword>
<keyword id="KW-0539">Nucleus</keyword>
<keyword id="KW-1185">Reference proteome</keyword>
<keyword id="KW-0964">Secreted</keyword>
<organism>
    <name type="scientific">Gallus gallus</name>
    <name type="common">Chicken</name>
    <dbReference type="NCBI Taxonomy" id="9031"/>
    <lineage>
        <taxon>Eukaryota</taxon>
        <taxon>Metazoa</taxon>
        <taxon>Chordata</taxon>
        <taxon>Craniata</taxon>
        <taxon>Vertebrata</taxon>
        <taxon>Euteleostomi</taxon>
        <taxon>Archelosauria</taxon>
        <taxon>Archosauria</taxon>
        <taxon>Dinosauria</taxon>
        <taxon>Saurischia</taxon>
        <taxon>Theropoda</taxon>
        <taxon>Coelurosauria</taxon>
        <taxon>Aves</taxon>
        <taxon>Neognathae</taxon>
        <taxon>Galloanserae</taxon>
        <taxon>Galliformes</taxon>
        <taxon>Phasianidae</taxon>
        <taxon>Phasianinae</taxon>
        <taxon>Gallus</taxon>
    </lineage>
</organism>
<reference key="1">
    <citation type="journal article" date="1991" name="Development">
        <title>Differentiating and mature neurons express the acidic fibroblast growth factor gene during chick neural development.</title>
        <authorList>
            <person name="Schnurch H."/>
            <person name="Risau W."/>
        </authorList>
    </citation>
    <scope>NUCLEOTIDE SEQUENCE [GENOMIC DNA / MRNA]</scope>
</reference>
<reference key="2">
    <citation type="submission" date="1995-07" db="EMBL/GenBank/DDBJ databases">
        <authorList>
            <person name="Martin G.R."/>
            <person name="Han J.K."/>
        </authorList>
    </citation>
    <scope>NUCLEOTIDE SEQUENCE [MRNA]</scope>
</reference>
<reference key="3">
    <citation type="journal article" date="1988" name="EMBO J.">
        <title>Endothelial cell growth factors in embryonic and adult chick brain are related to human acidic fibroblast growth factor.</title>
        <authorList>
            <person name="Risau W."/>
            <person name="Gautschi-Sova P."/>
            <person name="Boehlen P."/>
        </authorList>
    </citation>
    <scope>PROTEIN SEQUENCE OF 22-48</scope>
</reference>
<protein>
    <recommendedName>
        <fullName>Fibroblast growth factor 1</fullName>
        <shortName>FGF-1</shortName>
    </recommendedName>
    <alternativeName>
        <fullName>Acidic fibroblast growth factor</fullName>
        <shortName>aFGF</shortName>
    </alternativeName>
    <alternativeName>
        <fullName>Endothelial cell growth factor</fullName>
        <shortName>ECGF</shortName>
    </alternativeName>
    <alternativeName>
        <fullName>Heparin-binding growth factor 1</fullName>
        <shortName>HBGF-1</shortName>
    </alternativeName>
    <component>
        <recommendedName>
            <fullName>Endothelial cell growth factor alpha</fullName>
        </recommendedName>
    </component>
</protein>
<name>FGF1_CHICK</name>
<proteinExistence type="evidence at protein level"/>
<accession>P19596</accession>
<evidence type="ECO:0000250" key="1"/>
<evidence type="ECO:0000250" key="2">
    <source>
        <dbReference type="UniProtKB" id="P05230"/>
    </source>
</evidence>
<evidence type="ECO:0000305" key="3"/>